<dbReference type="EC" id="7.1.1.9"/>
<dbReference type="EMBL" id="X64823">
    <property type="protein sequence ID" value="CAA46035.1"/>
    <property type="molecule type" value="Genomic_DNA"/>
</dbReference>
<dbReference type="EMBL" id="X64824">
    <property type="protein sequence ID" value="CAA46036.1"/>
    <property type="molecule type" value="Genomic_DNA"/>
</dbReference>
<dbReference type="PIR" id="S33370">
    <property type="entry name" value="S33370"/>
</dbReference>
<dbReference type="PIR" id="S33373">
    <property type="entry name" value="S33373"/>
</dbReference>
<dbReference type="RefSeq" id="YP_003127080.1">
    <property type="nucleotide sequence ID" value="NC_013147.1"/>
</dbReference>
<dbReference type="SMR" id="P43374"/>
<dbReference type="GeneID" id="8363742"/>
<dbReference type="GO" id="GO:0005743">
    <property type="term" value="C:mitochondrial inner membrane"/>
    <property type="evidence" value="ECO:0007669"/>
    <property type="project" value="UniProtKB-SubCell"/>
</dbReference>
<dbReference type="GO" id="GO:0005507">
    <property type="term" value="F:copper ion binding"/>
    <property type="evidence" value="ECO:0007669"/>
    <property type="project" value="InterPro"/>
</dbReference>
<dbReference type="GO" id="GO:0004129">
    <property type="term" value="F:cytochrome-c oxidase activity"/>
    <property type="evidence" value="ECO:0007669"/>
    <property type="project" value="UniProtKB-EC"/>
</dbReference>
<dbReference type="GO" id="GO:0042773">
    <property type="term" value="P:ATP synthesis coupled electron transport"/>
    <property type="evidence" value="ECO:0007669"/>
    <property type="project" value="TreeGrafter"/>
</dbReference>
<dbReference type="CDD" id="cd13912">
    <property type="entry name" value="CcO_II_C"/>
    <property type="match status" value="1"/>
</dbReference>
<dbReference type="FunFam" id="1.10.287.90:FF:000004">
    <property type="entry name" value="Cytochrome c oxidase subunit 2"/>
    <property type="match status" value="1"/>
</dbReference>
<dbReference type="FunFam" id="2.60.40.420:FF:000001">
    <property type="entry name" value="Cytochrome c oxidase subunit 2"/>
    <property type="match status" value="1"/>
</dbReference>
<dbReference type="Gene3D" id="1.10.287.90">
    <property type="match status" value="1"/>
</dbReference>
<dbReference type="Gene3D" id="2.60.40.420">
    <property type="entry name" value="Cupredoxins - blue copper proteins"/>
    <property type="match status" value="1"/>
</dbReference>
<dbReference type="InterPro" id="IPR045187">
    <property type="entry name" value="CcO_II"/>
</dbReference>
<dbReference type="InterPro" id="IPR002429">
    <property type="entry name" value="CcO_II-like_C"/>
</dbReference>
<dbReference type="InterPro" id="IPR034210">
    <property type="entry name" value="CcO_II_C"/>
</dbReference>
<dbReference type="InterPro" id="IPR001505">
    <property type="entry name" value="Copper_CuA"/>
</dbReference>
<dbReference type="InterPro" id="IPR008972">
    <property type="entry name" value="Cupredoxin"/>
</dbReference>
<dbReference type="InterPro" id="IPR011759">
    <property type="entry name" value="Cyt_c_oxidase_su2_TM_dom"/>
</dbReference>
<dbReference type="InterPro" id="IPR036257">
    <property type="entry name" value="Cyt_c_oxidase_su2_TM_sf"/>
</dbReference>
<dbReference type="PANTHER" id="PTHR22888:SF9">
    <property type="entry name" value="CYTOCHROME C OXIDASE SUBUNIT 2"/>
    <property type="match status" value="1"/>
</dbReference>
<dbReference type="PANTHER" id="PTHR22888">
    <property type="entry name" value="CYTOCHROME C OXIDASE, SUBUNIT II"/>
    <property type="match status" value="1"/>
</dbReference>
<dbReference type="Pfam" id="PF00116">
    <property type="entry name" value="COX2"/>
    <property type="match status" value="1"/>
</dbReference>
<dbReference type="Pfam" id="PF02790">
    <property type="entry name" value="COX2_TM"/>
    <property type="match status" value="1"/>
</dbReference>
<dbReference type="PRINTS" id="PR01166">
    <property type="entry name" value="CYCOXIDASEII"/>
</dbReference>
<dbReference type="SUPFAM" id="SSF49503">
    <property type="entry name" value="Cupredoxins"/>
    <property type="match status" value="1"/>
</dbReference>
<dbReference type="SUPFAM" id="SSF81464">
    <property type="entry name" value="Cytochrome c oxidase subunit II-like, transmembrane region"/>
    <property type="match status" value="1"/>
</dbReference>
<dbReference type="PROSITE" id="PS00078">
    <property type="entry name" value="COX2"/>
    <property type="match status" value="1"/>
</dbReference>
<dbReference type="PROSITE" id="PS50857">
    <property type="entry name" value="COX2_CUA"/>
    <property type="match status" value="1"/>
</dbReference>
<dbReference type="PROSITE" id="PS50999">
    <property type="entry name" value="COX2_TM"/>
    <property type="match status" value="1"/>
</dbReference>
<organism>
    <name type="scientific">Dekkera bruxellensis</name>
    <name type="common">Brettanomyces custersii</name>
    <dbReference type="NCBI Taxonomy" id="5007"/>
    <lineage>
        <taxon>Eukaryota</taxon>
        <taxon>Fungi</taxon>
        <taxon>Dikarya</taxon>
        <taxon>Ascomycota</taxon>
        <taxon>Saccharomycotina</taxon>
        <taxon>Pichiomycetes</taxon>
        <taxon>Pichiales</taxon>
        <taxon>Pichiaceae</taxon>
        <taxon>Brettanomyces</taxon>
    </lineage>
</organism>
<proteinExistence type="inferred from homology"/>
<sequence length="245" mass="28275">MYMLNNMLNDVPTPWGMFFQDSATPNMEGMMELHNNVMFYLCMMLGFVSYMLYNMLTTYNHSVLPYKYLYHGQFIEIVWTTFPAMILLIIAFPSFILLYICDEVIAPAMTIKAMGLQWYWKYEYSDFIDDKGETIEFESYMIPEDLLEEGQLRQLDVDSPIVCPVDTHMRFIVTAADVIHDFAMPSLGIKIDAVPGRLNQTSALIQREGVYYGQCSELCGVMHSSMPIKIEAVSLGEFLAWIDEQ</sequence>
<protein>
    <recommendedName>
        <fullName>Cytochrome c oxidase subunit 2</fullName>
        <ecNumber>7.1.1.9</ecNumber>
    </recommendedName>
    <alternativeName>
        <fullName>Cytochrome c oxidase polypeptide II</fullName>
    </alternativeName>
</protein>
<accession>P43374</accession>
<accession>P43371</accession>
<evidence type="ECO:0000250" key="1">
    <source>
        <dbReference type="UniProtKB" id="P00410"/>
    </source>
</evidence>
<evidence type="ECO:0000255" key="2"/>
<evidence type="ECO:0000305" key="3"/>
<reference key="1">
    <citation type="journal article" date="1993" name="J. Mol. Evol.">
        <title>Larger rearranged mitochondrial genomes in Dekkera/Brettanomyces yeasts are more closely related than smaller genomes with a conserved gene order.</title>
        <authorList>
            <person name="Hoeben P."/>
            <person name="Weiller G."/>
            <person name="Clark-Walker G.D."/>
        </authorList>
    </citation>
    <scope>NUCLEOTIDE SEQUENCE [GENOMIC DNA]</scope>
    <source>
        <strain>CBS 5512</strain>
        <strain>CBS 74</strain>
    </source>
</reference>
<geneLocation type="mitochondrion"/>
<comment type="function">
    <text evidence="1">Component of the cytochrome c oxidase, the last enzyme in the mitochondrial electron transport chain which drives oxidative phosphorylation. The respiratory chain contains 3 multisubunit complexes succinate dehydrogenase (complex II, CII), ubiquinol-cytochrome c oxidoreductase (cytochrome b-c1 complex, complex III, CIII) and cytochrome c oxidase (complex IV, CIV), that cooperate to transfer electrons derived from NADH and succinate to molecular oxygen, creating an electrochemical gradient over the inner membrane that drives transmembrane transport and the ATP synthase. Cytochrome c oxidase is the component of the respiratory chain that catalyzes the reduction of oxygen to water. Electrons originating from reduced cytochrome c in the intermembrane space (IMS) are transferred via the dinuclear copper A center (CU(A)) of subunit 2 and heme A of subunit 1 to the active site in subunit 1, a binuclear center (BNC) formed by heme A3 and copper B (CU(B)). The BNC reduces molecular oxygen to 2 water molecules using 4 electrons from cytochrome c in the IMS and 4 protons from the mitochondrial matrix.</text>
</comment>
<comment type="catalytic activity">
    <reaction evidence="1">
        <text>4 Fe(II)-[cytochrome c] + O2 + 8 H(+)(in) = 4 Fe(III)-[cytochrome c] + 2 H2O + 4 H(+)(out)</text>
        <dbReference type="Rhea" id="RHEA:11436"/>
        <dbReference type="Rhea" id="RHEA-COMP:10350"/>
        <dbReference type="Rhea" id="RHEA-COMP:14399"/>
        <dbReference type="ChEBI" id="CHEBI:15377"/>
        <dbReference type="ChEBI" id="CHEBI:15378"/>
        <dbReference type="ChEBI" id="CHEBI:15379"/>
        <dbReference type="ChEBI" id="CHEBI:29033"/>
        <dbReference type="ChEBI" id="CHEBI:29034"/>
        <dbReference type="EC" id="7.1.1.9"/>
    </reaction>
    <physiologicalReaction direction="left-to-right" evidence="1">
        <dbReference type="Rhea" id="RHEA:11437"/>
    </physiologicalReaction>
</comment>
<comment type="cofactor">
    <cofactor evidence="1">
        <name>Cu cation</name>
        <dbReference type="ChEBI" id="CHEBI:23378"/>
    </cofactor>
    <text evidence="1">Binds a dinuclear copper A center per subunit.</text>
</comment>
<comment type="subunit">
    <text evidence="1">Component of the cytochrome c oxidase (complex IV, CIV), a multisubunit enzyme composed of a catalytic core of 3 subunits and several supernumerary subunits. The complex exists as a monomer or a dimer and forms supercomplexes (SCs) in the inner mitochondrial membrane with ubiquinol-cytochrome c oxidoreductase (cytochrome b-c1 complex, complex III, CIII).</text>
</comment>
<comment type="subcellular location">
    <subcellularLocation>
        <location evidence="1">Mitochondrion inner membrane</location>
        <topology evidence="1">Multi-pass membrane protein</topology>
    </subcellularLocation>
</comment>
<comment type="similarity">
    <text evidence="3">Belongs to the cytochrome c oxidase subunit 2 family.</text>
</comment>
<name>COX2_DEKBR</name>
<gene>
    <name type="primary">COX2</name>
</gene>
<keyword id="KW-0186">Copper</keyword>
<keyword id="KW-0249">Electron transport</keyword>
<keyword id="KW-0460">Magnesium</keyword>
<keyword id="KW-0472">Membrane</keyword>
<keyword id="KW-0479">Metal-binding</keyword>
<keyword id="KW-0496">Mitochondrion</keyword>
<keyword id="KW-0999">Mitochondrion inner membrane</keyword>
<keyword id="KW-0679">Respiratory chain</keyword>
<keyword id="KW-1278">Translocase</keyword>
<keyword id="KW-0812">Transmembrane</keyword>
<keyword id="KW-1133">Transmembrane helix</keyword>
<keyword id="KW-0813">Transport</keyword>
<feature type="chain" id="PRO_0000183569" description="Cytochrome c oxidase subunit 2">
    <location>
        <begin position="1"/>
        <end position="245"/>
    </location>
</feature>
<feature type="topological domain" description="Mitochondrial intermembrane" evidence="2">
    <location>
        <begin position="1"/>
        <end position="36"/>
    </location>
</feature>
<feature type="transmembrane region" description="Helical" evidence="2">
    <location>
        <begin position="37"/>
        <end position="56"/>
    </location>
</feature>
<feature type="topological domain" description="Mitochondrial matrix" evidence="2">
    <location>
        <begin position="57"/>
        <end position="76"/>
    </location>
</feature>
<feature type="transmembrane region" description="Helical" evidence="2">
    <location>
        <begin position="77"/>
        <end position="101"/>
    </location>
</feature>
<feature type="topological domain" description="Mitochondrial intermembrane" evidence="2">
    <location>
        <begin position="102"/>
        <end position="245"/>
    </location>
</feature>
<feature type="binding site" evidence="1">
    <location>
        <position position="180"/>
    </location>
    <ligand>
        <name>Cu cation</name>
        <dbReference type="ChEBI" id="CHEBI:23378"/>
        <label>A1</label>
    </ligand>
</feature>
<feature type="binding site" evidence="1">
    <location>
        <position position="215"/>
    </location>
    <ligand>
        <name>Cu cation</name>
        <dbReference type="ChEBI" id="CHEBI:23378"/>
        <label>A1</label>
    </ligand>
</feature>
<feature type="binding site" evidence="1">
    <location>
        <position position="215"/>
    </location>
    <ligand>
        <name>Cu cation</name>
        <dbReference type="ChEBI" id="CHEBI:23378"/>
        <label>A2</label>
    </ligand>
</feature>
<feature type="binding site" evidence="1">
    <location>
        <position position="217"/>
    </location>
    <ligand>
        <name>Cu cation</name>
        <dbReference type="ChEBI" id="CHEBI:23378"/>
        <label>A2</label>
    </ligand>
</feature>
<feature type="binding site" evidence="1">
    <location>
        <position position="217"/>
    </location>
    <ligand>
        <name>Mg(2+)</name>
        <dbReference type="ChEBI" id="CHEBI:18420"/>
        <note>ligand shared with subunit 1</note>
    </ligand>
</feature>
<feature type="binding site" evidence="1">
    <location>
        <position position="219"/>
    </location>
    <ligand>
        <name>Cu cation</name>
        <dbReference type="ChEBI" id="CHEBI:23378"/>
        <label>A1</label>
    </ligand>
</feature>
<feature type="binding site" evidence="1">
    <location>
        <position position="219"/>
    </location>
    <ligand>
        <name>Cu cation</name>
        <dbReference type="ChEBI" id="CHEBI:23378"/>
        <label>A2</label>
    </ligand>
</feature>
<feature type="binding site" evidence="1">
    <location>
        <position position="223"/>
    </location>
    <ligand>
        <name>Cu cation</name>
        <dbReference type="ChEBI" id="CHEBI:23378"/>
        <label>A2</label>
    </ligand>
</feature>
<feature type="binding site" evidence="1">
    <location>
        <position position="226"/>
    </location>
    <ligand>
        <name>Cu cation</name>
        <dbReference type="ChEBI" id="CHEBI:23378"/>
        <label>A1</label>
    </ligand>
</feature>
<feature type="sequence variant" description="In strain: CBS 5512.">
    <original>I</original>
    <variation>M</variation>
    <location>
        <position position="90"/>
    </location>
</feature>
<feature type="sequence variant" description="In strain: CBS 5512.">
    <original>I</original>
    <variation>M</variation>
    <location>
        <position position="142"/>
    </location>
</feature>
<feature type="sequence variant" description="In strain: CBS 5512.">
    <original>M</original>
    <variation>I</variation>
    <location>
        <position position="169"/>
    </location>
</feature>